<name>ARGD_ECOLI</name>
<gene>
    <name evidence="3" type="primary">argD</name>
    <name evidence="3" type="synonym">dapC</name>
    <name type="synonym">dtu</name>
    <name type="ordered locus">b3359</name>
    <name type="ordered locus">JW3322</name>
</gene>
<accession>P18335</accession>
<accession>Q2M725</accession>
<reference key="1">
    <citation type="journal article" date="1990" name="Gene">
        <title>Escherichia coli and Saccharomyces cerevisiae acetylornithine aminotransferase: evolutionary relationship with ornithine aminotransferase.</title>
        <authorList>
            <person name="Heimberg H."/>
            <person name="Boyen A."/>
            <person name="Crabeel M."/>
            <person name="Glansdorff N."/>
        </authorList>
    </citation>
    <scope>NUCLEOTIDE SEQUENCE [GENOMIC DNA]</scope>
</reference>
<reference key="2">
    <citation type="journal article" date="1997" name="Science">
        <title>The complete genome sequence of Escherichia coli K-12.</title>
        <authorList>
            <person name="Blattner F.R."/>
            <person name="Plunkett G. III"/>
            <person name="Bloch C.A."/>
            <person name="Perna N.T."/>
            <person name="Burland V."/>
            <person name="Riley M."/>
            <person name="Collado-Vides J."/>
            <person name="Glasner J.D."/>
            <person name="Rode C.K."/>
            <person name="Mayhew G.F."/>
            <person name="Gregor J."/>
            <person name="Davis N.W."/>
            <person name="Kirkpatrick H.A."/>
            <person name="Goeden M.A."/>
            <person name="Rose D.J."/>
            <person name="Mau B."/>
            <person name="Shao Y."/>
        </authorList>
    </citation>
    <scope>NUCLEOTIDE SEQUENCE [LARGE SCALE GENOMIC DNA]</scope>
    <source>
        <strain>K12 / MG1655 / ATCC 47076</strain>
    </source>
</reference>
<reference key="3">
    <citation type="journal article" date="2006" name="Mol. Syst. Biol.">
        <title>Highly accurate genome sequences of Escherichia coli K-12 strains MG1655 and W3110.</title>
        <authorList>
            <person name="Hayashi K."/>
            <person name="Morooka N."/>
            <person name="Yamamoto Y."/>
            <person name="Fujita K."/>
            <person name="Isono K."/>
            <person name="Choi S."/>
            <person name="Ohtsubo E."/>
            <person name="Baba T."/>
            <person name="Wanner B.L."/>
            <person name="Mori H."/>
            <person name="Horiuchi T."/>
        </authorList>
    </citation>
    <scope>NUCLEOTIDE SEQUENCE [LARGE SCALE GENOMIC DNA]</scope>
    <source>
        <strain>K12 / W3110 / ATCC 27325 / DSM 5911</strain>
    </source>
</reference>
<reference key="4">
    <citation type="journal article" date="1997" name="Electrophoresis">
        <title>Comparing the predicted and observed properties of proteins encoded in the genome of Escherichia coli K-12.</title>
        <authorList>
            <person name="Link A.J."/>
            <person name="Robison K."/>
            <person name="Church G.M."/>
        </authorList>
    </citation>
    <scope>PROTEIN SEQUENCE OF 2-13</scope>
    <source>
        <strain>K12 / EMG2</strain>
    </source>
</reference>
<reference key="5">
    <citation type="journal article" date="1999" name="Biochemistry">
        <title>The dual biosynthetic capability of N-acetylornithine aminotransferase in arginine and lysine biosynthesis.</title>
        <authorList>
            <person name="Ledwidge R."/>
            <person name="Blanchard J.S."/>
        </authorList>
    </citation>
    <scope>PROTEIN SEQUENCE OF 2-27 AND 69-77</scope>
    <scope>FUNCTION</scope>
    <scope>CATALYTIC ACTIVITY</scope>
    <scope>BIOPHYSICOCHEMICAL PROPERTIES</scope>
    <scope>COFACTOR</scope>
    <scope>PATHWAY</scope>
</reference>
<sequence>MAIEQTAITRATFDEVILPIYAPAEFIPVKGQGSRIWDQQGKEYVDFAGGIAVTALGHCHPALVNALKTQGETLWHISNVFTNEPALRLGRKLIEATFAERVVFMNSGTEANETAFKLARHYACVRHSPFKTKIIAFHNAFHGRSLFTVSVGGQPKYSDGFGPKPADIIHVPFNDLHAVKAVMDDHTCAVVVEPIQGEGGVTAATPEFLQGLRELCDQHQALLVFDEVQCGMGRTGDLFAYMHYGVTPDILTSAKALGGGFPISAMLTTAEIASAFHPGSHGSTYGGNPLACAVAGAAFDIINTPEVLEGIQAKRQRFVDHLQKIDQQYDVFSDIRGMGLLIGAELKPQYKGRARDFLYAGAEAGVMVLNAGPDVMRFAPSLVVEDADIDEGMQRFAHAVAKVVGA</sequence>
<protein>
    <recommendedName>
        <fullName evidence="3 8">Acetylornithine/succinyldiaminopimelate aminotransferase</fullName>
        <shortName evidence="3 7">ACOAT</shortName>
        <shortName evidence="3 6">DapATase</shortName>
        <shortName evidence="3">Succinyldiaminopimelate transferase</shortName>
        <ecNumber evidence="3 4">2.6.1.11</ecNumber>
        <ecNumber evidence="3 4">2.6.1.17</ecNumber>
    </recommendedName>
</protein>
<dbReference type="EC" id="2.6.1.11" evidence="3 4"/>
<dbReference type="EC" id="2.6.1.17" evidence="3 4"/>
<dbReference type="EMBL" id="M32796">
    <property type="protein sequence ID" value="AAA23480.1"/>
    <property type="molecule type" value="Genomic_DNA"/>
</dbReference>
<dbReference type="EMBL" id="U18997">
    <property type="protein sequence ID" value="AAA58156.1"/>
    <property type="molecule type" value="Genomic_DNA"/>
</dbReference>
<dbReference type="EMBL" id="U00096">
    <property type="protein sequence ID" value="AAC76384.1"/>
    <property type="molecule type" value="Genomic_DNA"/>
</dbReference>
<dbReference type="EMBL" id="AP009048">
    <property type="protein sequence ID" value="BAE77931.1"/>
    <property type="molecule type" value="Genomic_DNA"/>
</dbReference>
<dbReference type="PIR" id="B65130">
    <property type="entry name" value="B65130"/>
</dbReference>
<dbReference type="RefSeq" id="NP_417818.1">
    <property type="nucleotide sequence ID" value="NC_000913.3"/>
</dbReference>
<dbReference type="RefSeq" id="WP_000963792.1">
    <property type="nucleotide sequence ID" value="NZ_SSZK01000008.1"/>
</dbReference>
<dbReference type="SMR" id="P18335"/>
<dbReference type="BioGRID" id="4260742">
    <property type="interactions" value="10"/>
</dbReference>
<dbReference type="DIP" id="DIP-9138N"/>
<dbReference type="FunCoup" id="P18335">
    <property type="interactions" value="805"/>
</dbReference>
<dbReference type="IntAct" id="P18335">
    <property type="interactions" value="6"/>
</dbReference>
<dbReference type="STRING" id="511145.b3359"/>
<dbReference type="jPOST" id="P18335"/>
<dbReference type="PaxDb" id="511145-b3359"/>
<dbReference type="EnsemblBacteria" id="AAC76384">
    <property type="protein sequence ID" value="AAC76384"/>
    <property type="gene ID" value="b3359"/>
</dbReference>
<dbReference type="GeneID" id="947864"/>
<dbReference type="KEGG" id="ecj:JW3322"/>
<dbReference type="KEGG" id="eco:b3359"/>
<dbReference type="KEGG" id="ecoc:C3026_18245"/>
<dbReference type="PATRIC" id="fig|1411691.4.peg.3371"/>
<dbReference type="EchoBASE" id="EB0064"/>
<dbReference type="eggNOG" id="COG4992">
    <property type="taxonomic scope" value="Bacteria"/>
</dbReference>
<dbReference type="HOGENOM" id="CLU_016922_10_1_6"/>
<dbReference type="InParanoid" id="P18335"/>
<dbReference type="OMA" id="MVPGFKY"/>
<dbReference type="OrthoDB" id="9801052at2"/>
<dbReference type="PhylomeDB" id="P18335"/>
<dbReference type="BioCyc" id="EcoCyc:ACETYLORNTRANSAM-MONOMER"/>
<dbReference type="BioCyc" id="MetaCyc:ACETYLORNTRANSAM-MONOMER"/>
<dbReference type="UniPathway" id="UPA00034">
    <property type="reaction ID" value="UER00020"/>
</dbReference>
<dbReference type="UniPathway" id="UPA00068">
    <property type="reaction ID" value="UER00109"/>
</dbReference>
<dbReference type="PRO" id="PR:P18335"/>
<dbReference type="Proteomes" id="UP000000625">
    <property type="component" value="Chromosome"/>
</dbReference>
<dbReference type="GO" id="GO:0005737">
    <property type="term" value="C:cytoplasm"/>
    <property type="evidence" value="ECO:0007669"/>
    <property type="project" value="UniProtKB-SubCell"/>
</dbReference>
<dbReference type="GO" id="GO:0042802">
    <property type="term" value="F:identical protein binding"/>
    <property type="evidence" value="ECO:0000318"/>
    <property type="project" value="GO_Central"/>
</dbReference>
<dbReference type="GO" id="GO:0003992">
    <property type="term" value="F:N2-acetyl-L-ornithine:2-oxoglutarate 5-aminotransferase activity"/>
    <property type="evidence" value="ECO:0000314"/>
    <property type="project" value="EcoliWiki"/>
</dbReference>
<dbReference type="GO" id="GO:0030170">
    <property type="term" value="F:pyridoxal phosphate binding"/>
    <property type="evidence" value="ECO:0000314"/>
    <property type="project" value="EcoCyc"/>
</dbReference>
<dbReference type="GO" id="GO:0009016">
    <property type="term" value="F:succinyldiaminopimelate transaminase activity"/>
    <property type="evidence" value="ECO:0000314"/>
    <property type="project" value="EcoCyc"/>
</dbReference>
<dbReference type="GO" id="GO:0042450">
    <property type="term" value="P:arginine biosynthetic process via ornithine"/>
    <property type="evidence" value="ECO:0000316"/>
    <property type="project" value="EcoCyc"/>
</dbReference>
<dbReference type="GO" id="GO:0006526">
    <property type="term" value="P:L-arginine biosynthetic process"/>
    <property type="evidence" value="ECO:0007669"/>
    <property type="project" value="UniProtKB-UniRule"/>
</dbReference>
<dbReference type="GO" id="GO:0033359">
    <property type="term" value="P:lysine biosynthetic process via diaminopimelate and N-succinyl-2-amino-6-ketopimelate"/>
    <property type="evidence" value="ECO:0000316"/>
    <property type="project" value="EcoCyc"/>
</dbReference>
<dbReference type="CDD" id="cd00610">
    <property type="entry name" value="OAT_like"/>
    <property type="match status" value="1"/>
</dbReference>
<dbReference type="FunFam" id="3.40.640.10:FF:000004">
    <property type="entry name" value="Acetylornithine aminotransferase"/>
    <property type="match status" value="1"/>
</dbReference>
<dbReference type="FunFam" id="3.90.1150.10:FF:000009">
    <property type="entry name" value="Succinylornithine transaminase"/>
    <property type="match status" value="1"/>
</dbReference>
<dbReference type="Gene3D" id="3.90.1150.10">
    <property type="entry name" value="Aspartate Aminotransferase, domain 1"/>
    <property type="match status" value="1"/>
</dbReference>
<dbReference type="Gene3D" id="3.40.640.10">
    <property type="entry name" value="Type I PLP-dependent aspartate aminotransferase-like (Major domain)"/>
    <property type="match status" value="1"/>
</dbReference>
<dbReference type="HAMAP" id="MF_01107">
    <property type="entry name" value="ArgD_aminotrans_3"/>
    <property type="match status" value="1"/>
</dbReference>
<dbReference type="InterPro" id="IPR017652">
    <property type="entry name" value="Ac/SucOrn_transaminase_bac"/>
</dbReference>
<dbReference type="InterPro" id="IPR004636">
    <property type="entry name" value="AcOrn/SuccOrn_fam"/>
</dbReference>
<dbReference type="InterPro" id="IPR005814">
    <property type="entry name" value="Aminotrans_3"/>
</dbReference>
<dbReference type="InterPro" id="IPR049704">
    <property type="entry name" value="Aminotrans_3_PPA_site"/>
</dbReference>
<dbReference type="InterPro" id="IPR050103">
    <property type="entry name" value="Class-III_PLP-dep_AT"/>
</dbReference>
<dbReference type="InterPro" id="IPR015424">
    <property type="entry name" value="PyrdxlP-dep_Trfase"/>
</dbReference>
<dbReference type="InterPro" id="IPR015421">
    <property type="entry name" value="PyrdxlP-dep_Trfase_major"/>
</dbReference>
<dbReference type="InterPro" id="IPR015422">
    <property type="entry name" value="PyrdxlP-dep_Trfase_small"/>
</dbReference>
<dbReference type="NCBIfam" id="TIGR03246">
    <property type="entry name" value="arg_catab_astC"/>
    <property type="match status" value="1"/>
</dbReference>
<dbReference type="NCBIfam" id="TIGR00707">
    <property type="entry name" value="argD"/>
    <property type="match status" value="1"/>
</dbReference>
<dbReference type="NCBIfam" id="NF002325">
    <property type="entry name" value="PRK01278.1"/>
    <property type="match status" value="1"/>
</dbReference>
<dbReference type="NCBIfam" id="NF003468">
    <property type="entry name" value="PRK05093.1"/>
    <property type="match status" value="1"/>
</dbReference>
<dbReference type="NCBIfam" id="NF009047">
    <property type="entry name" value="PRK12381.1"/>
    <property type="match status" value="1"/>
</dbReference>
<dbReference type="PANTHER" id="PTHR11986:SF122">
    <property type="entry name" value="ACETYLORNITHINE_SUCCINYLDIAMINOPIMELATE AMINOTRANSFERASE"/>
    <property type="match status" value="1"/>
</dbReference>
<dbReference type="PANTHER" id="PTHR11986">
    <property type="entry name" value="AMINOTRANSFERASE CLASS III"/>
    <property type="match status" value="1"/>
</dbReference>
<dbReference type="Pfam" id="PF00202">
    <property type="entry name" value="Aminotran_3"/>
    <property type="match status" value="1"/>
</dbReference>
<dbReference type="PIRSF" id="PIRSF000521">
    <property type="entry name" value="Transaminase_4ab_Lys_Orn"/>
    <property type="match status" value="1"/>
</dbReference>
<dbReference type="SUPFAM" id="SSF53383">
    <property type="entry name" value="PLP-dependent transferases"/>
    <property type="match status" value="1"/>
</dbReference>
<dbReference type="PROSITE" id="PS00600">
    <property type="entry name" value="AA_TRANSFER_CLASS_3"/>
    <property type="match status" value="1"/>
</dbReference>
<comment type="function">
    <text evidence="3 4">Involved in both the arginine and lysine biosynthetic pathways.</text>
</comment>
<comment type="catalytic activity">
    <reaction evidence="3 4">
        <text>N(2)-acetyl-L-ornithine + 2-oxoglutarate = N-acetyl-L-glutamate 5-semialdehyde + L-glutamate</text>
        <dbReference type="Rhea" id="RHEA:18049"/>
        <dbReference type="ChEBI" id="CHEBI:16810"/>
        <dbReference type="ChEBI" id="CHEBI:29123"/>
        <dbReference type="ChEBI" id="CHEBI:29985"/>
        <dbReference type="ChEBI" id="CHEBI:57805"/>
        <dbReference type="EC" id="2.6.1.11"/>
    </reaction>
</comment>
<comment type="catalytic activity">
    <reaction evidence="3 4">
        <text>N-succinyl-(2S,6S)-2,6-diaminopimelate + 2-oxoglutarate = (S)-2-succinylamino-6-oxoheptanedioate + L-glutamate</text>
        <dbReference type="Rhea" id="RHEA:11960"/>
        <dbReference type="ChEBI" id="CHEBI:15685"/>
        <dbReference type="ChEBI" id="CHEBI:16810"/>
        <dbReference type="ChEBI" id="CHEBI:29985"/>
        <dbReference type="ChEBI" id="CHEBI:58087"/>
        <dbReference type="EC" id="2.6.1.17"/>
    </reaction>
</comment>
<comment type="cofactor">
    <cofactor evidence="3 9">
        <name>pyridoxal 5'-phosphate</name>
        <dbReference type="ChEBI" id="CHEBI:597326"/>
    </cofactor>
    <text evidence="3 9">Binds 1 pyridoxal phosphate per subunit.</text>
</comment>
<comment type="biophysicochemical properties">
    <kinetics>
        <KM evidence="4">0.15 mM for N-acetylornithine</KM>
        <KM evidence="4">0.075 mM for N-succinyldiaminopimelate</KM>
    </kinetics>
</comment>
<comment type="pathway">
    <text evidence="3 9">Amino-acid biosynthesis; L-arginine biosynthesis; N(2)-acetyl-L-ornithine from L-glutamate: step 4/4.</text>
</comment>
<comment type="pathway">
    <text evidence="3 9">Amino-acid biosynthesis; L-lysine biosynthesis via DAP pathway; LL-2,6-diaminopimelate from (S)-tetrahydrodipicolinate (succinylase route): step 2/3.</text>
</comment>
<comment type="subunit">
    <text evidence="3">Homodimer.</text>
</comment>
<comment type="subcellular location">
    <subcellularLocation>
        <location evidence="3 8">Cytoplasm</location>
    </subcellularLocation>
</comment>
<comment type="miscellaneous">
    <text>The reaction catalyzed by ACOAT is highly reversible. This enzyme may also transaminate ornithine.</text>
</comment>
<comment type="similarity">
    <text evidence="3 8">Belongs to the class-III pyridoxal-phosphate-dependent aminotransferase family. ArgD subfamily.</text>
</comment>
<organism>
    <name type="scientific">Escherichia coli (strain K12)</name>
    <dbReference type="NCBI Taxonomy" id="83333"/>
    <lineage>
        <taxon>Bacteria</taxon>
        <taxon>Pseudomonadati</taxon>
        <taxon>Pseudomonadota</taxon>
        <taxon>Gammaproteobacteria</taxon>
        <taxon>Enterobacterales</taxon>
        <taxon>Enterobacteriaceae</taxon>
        <taxon>Escherichia</taxon>
    </lineage>
</organism>
<proteinExistence type="evidence at protein level"/>
<feature type="initiator methionine" description="Removed" evidence="4 5">
    <location>
        <position position="1"/>
    </location>
</feature>
<feature type="chain" id="PRO_0000112743" description="Acetylornithine/succinyldiaminopimelate aminotransferase">
    <location>
        <begin position="2"/>
        <end position="406"/>
    </location>
</feature>
<feature type="binding site" evidence="1 3">
    <location>
        <begin position="108"/>
        <end position="109"/>
    </location>
    <ligand>
        <name>pyridoxal 5'-phosphate</name>
        <dbReference type="ChEBI" id="CHEBI:597326"/>
    </ligand>
</feature>
<feature type="binding site" evidence="1 3">
    <location>
        <position position="141"/>
    </location>
    <ligand>
        <name>pyridoxal 5'-phosphate</name>
        <dbReference type="ChEBI" id="CHEBI:597326"/>
    </ligand>
</feature>
<feature type="binding site" evidence="2 3">
    <location>
        <position position="144"/>
    </location>
    <ligand>
        <name>N(2)-acetyl-L-ornithine</name>
        <dbReference type="ChEBI" id="CHEBI:57805"/>
    </ligand>
</feature>
<feature type="binding site" evidence="1 3">
    <location>
        <begin position="226"/>
        <end position="229"/>
    </location>
    <ligand>
        <name>pyridoxal 5'-phosphate</name>
        <dbReference type="ChEBI" id="CHEBI:597326"/>
    </ligand>
</feature>
<feature type="binding site" evidence="2 3">
    <location>
        <position position="283"/>
    </location>
    <ligand>
        <name>N(2)-acetyl-L-ornithine</name>
        <dbReference type="ChEBI" id="CHEBI:57805"/>
    </ligand>
</feature>
<feature type="binding site" evidence="1 3">
    <location>
        <position position="284"/>
    </location>
    <ligand>
        <name>pyridoxal 5'-phosphate</name>
        <dbReference type="ChEBI" id="CHEBI:597326"/>
    </ligand>
</feature>
<feature type="modified residue" description="N6-(pyridoxal phosphate)lysine" evidence="1 3">
    <location>
        <position position="255"/>
    </location>
</feature>
<feature type="sequence conflict" description="In Ref. 1; AAA23480." evidence="8" ref="1">
    <original>GVT</original>
    <variation>ALA</variation>
    <location>
        <begin position="245"/>
        <end position="247"/>
    </location>
</feature>
<keyword id="KW-0028">Amino-acid biosynthesis</keyword>
<keyword id="KW-0032">Aminotransferase</keyword>
<keyword id="KW-0055">Arginine biosynthesis</keyword>
<keyword id="KW-0963">Cytoplasm</keyword>
<keyword id="KW-0903">Direct protein sequencing</keyword>
<keyword id="KW-0457">Lysine biosynthesis</keyword>
<keyword id="KW-0663">Pyridoxal phosphate</keyword>
<keyword id="KW-1185">Reference proteome</keyword>
<keyword id="KW-0808">Transferase</keyword>
<evidence type="ECO:0000250" key="1">
    <source>
        <dbReference type="UniProtKB" id="P40732"/>
    </source>
</evidence>
<evidence type="ECO:0000250" key="2">
    <source>
        <dbReference type="UniProtKB" id="Q5SHH5"/>
    </source>
</evidence>
<evidence type="ECO:0000255" key="3">
    <source>
        <dbReference type="HAMAP-Rule" id="MF_01107"/>
    </source>
</evidence>
<evidence type="ECO:0000269" key="4">
    <source>
    </source>
</evidence>
<evidence type="ECO:0000269" key="5">
    <source>
    </source>
</evidence>
<evidence type="ECO:0000303" key="6">
    <source>
    </source>
</evidence>
<evidence type="ECO:0000303" key="7">
    <source>
    </source>
</evidence>
<evidence type="ECO:0000305" key="8"/>
<evidence type="ECO:0000305" key="9">
    <source>
    </source>
</evidence>